<name>PUR5_STRA1</name>
<accession>Q3K400</accession>
<keyword id="KW-0067">ATP-binding</keyword>
<keyword id="KW-0963">Cytoplasm</keyword>
<keyword id="KW-0436">Ligase</keyword>
<keyword id="KW-0547">Nucleotide-binding</keyword>
<keyword id="KW-0658">Purine biosynthesis</keyword>
<reference key="1">
    <citation type="journal article" date="2005" name="Proc. Natl. Acad. Sci. U.S.A.">
        <title>Genome analysis of multiple pathogenic isolates of Streptococcus agalactiae: implications for the microbial 'pan-genome'.</title>
        <authorList>
            <person name="Tettelin H."/>
            <person name="Masignani V."/>
            <person name="Cieslewicz M.J."/>
            <person name="Donati C."/>
            <person name="Medini D."/>
            <person name="Ward N.L."/>
            <person name="Angiuoli S.V."/>
            <person name="Crabtree J."/>
            <person name="Jones A.L."/>
            <person name="Durkin A.S."/>
            <person name="DeBoy R.T."/>
            <person name="Davidsen T.M."/>
            <person name="Mora M."/>
            <person name="Scarselli M."/>
            <person name="Margarit y Ros I."/>
            <person name="Peterson J.D."/>
            <person name="Hauser C.R."/>
            <person name="Sundaram J.P."/>
            <person name="Nelson W.C."/>
            <person name="Madupu R."/>
            <person name="Brinkac L.M."/>
            <person name="Dodson R.J."/>
            <person name="Rosovitz M.J."/>
            <person name="Sullivan S.A."/>
            <person name="Daugherty S.C."/>
            <person name="Haft D.H."/>
            <person name="Selengut J."/>
            <person name="Gwinn M.L."/>
            <person name="Zhou L."/>
            <person name="Zafar N."/>
            <person name="Khouri H."/>
            <person name="Radune D."/>
            <person name="Dimitrov G."/>
            <person name="Watkins K."/>
            <person name="O'Connor K.J."/>
            <person name="Smith S."/>
            <person name="Utterback T.R."/>
            <person name="White O."/>
            <person name="Rubens C.E."/>
            <person name="Grandi G."/>
            <person name="Madoff L.C."/>
            <person name="Kasper D.L."/>
            <person name="Telford J.L."/>
            <person name="Wessels M.R."/>
            <person name="Rappuoli R."/>
            <person name="Fraser C.M."/>
        </authorList>
    </citation>
    <scope>NUCLEOTIDE SEQUENCE [LARGE SCALE GENOMIC DNA]</scope>
    <source>
        <strain>ATCC 27591 / A909 / CDC SS700</strain>
    </source>
</reference>
<dbReference type="EC" id="6.3.3.1" evidence="1"/>
<dbReference type="EMBL" id="CP000114">
    <property type="protein sequence ID" value="ABA45061.1"/>
    <property type="molecule type" value="Genomic_DNA"/>
</dbReference>
<dbReference type="RefSeq" id="WP_001291325.1">
    <property type="nucleotide sequence ID" value="NC_007432.1"/>
</dbReference>
<dbReference type="SMR" id="Q3K400"/>
<dbReference type="KEGG" id="sak:SAK_0060"/>
<dbReference type="HOGENOM" id="CLU_047116_0_0_9"/>
<dbReference type="UniPathway" id="UPA00074">
    <property type="reaction ID" value="UER00129"/>
</dbReference>
<dbReference type="GO" id="GO:0005829">
    <property type="term" value="C:cytosol"/>
    <property type="evidence" value="ECO:0007669"/>
    <property type="project" value="TreeGrafter"/>
</dbReference>
<dbReference type="GO" id="GO:0005524">
    <property type="term" value="F:ATP binding"/>
    <property type="evidence" value="ECO:0007669"/>
    <property type="project" value="UniProtKB-KW"/>
</dbReference>
<dbReference type="GO" id="GO:0004637">
    <property type="term" value="F:phosphoribosylamine-glycine ligase activity"/>
    <property type="evidence" value="ECO:0007669"/>
    <property type="project" value="TreeGrafter"/>
</dbReference>
<dbReference type="GO" id="GO:0004641">
    <property type="term" value="F:phosphoribosylformylglycinamidine cyclo-ligase activity"/>
    <property type="evidence" value="ECO:0007669"/>
    <property type="project" value="UniProtKB-UniRule"/>
</dbReference>
<dbReference type="GO" id="GO:0006189">
    <property type="term" value="P:'de novo' IMP biosynthetic process"/>
    <property type="evidence" value="ECO:0007669"/>
    <property type="project" value="UniProtKB-UniRule"/>
</dbReference>
<dbReference type="GO" id="GO:0046084">
    <property type="term" value="P:adenine biosynthetic process"/>
    <property type="evidence" value="ECO:0007669"/>
    <property type="project" value="TreeGrafter"/>
</dbReference>
<dbReference type="CDD" id="cd02196">
    <property type="entry name" value="PurM"/>
    <property type="match status" value="1"/>
</dbReference>
<dbReference type="FunFam" id="3.30.1330.10:FF:000001">
    <property type="entry name" value="Phosphoribosylformylglycinamidine cyclo-ligase"/>
    <property type="match status" value="1"/>
</dbReference>
<dbReference type="FunFam" id="3.90.650.10:FF:000011">
    <property type="entry name" value="Phosphoribosylformylglycinamidine cyclo-ligase"/>
    <property type="match status" value="1"/>
</dbReference>
<dbReference type="Gene3D" id="3.90.650.10">
    <property type="entry name" value="PurM-like C-terminal domain"/>
    <property type="match status" value="1"/>
</dbReference>
<dbReference type="Gene3D" id="3.30.1330.10">
    <property type="entry name" value="PurM-like, N-terminal domain"/>
    <property type="match status" value="1"/>
</dbReference>
<dbReference type="HAMAP" id="MF_00741">
    <property type="entry name" value="AIRS"/>
    <property type="match status" value="1"/>
</dbReference>
<dbReference type="InterPro" id="IPR010918">
    <property type="entry name" value="PurM-like_C_dom"/>
</dbReference>
<dbReference type="InterPro" id="IPR036676">
    <property type="entry name" value="PurM-like_C_sf"/>
</dbReference>
<dbReference type="InterPro" id="IPR016188">
    <property type="entry name" value="PurM-like_N"/>
</dbReference>
<dbReference type="InterPro" id="IPR036921">
    <property type="entry name" value="PurM-like_N_sf"/>
</dbReference>
<dbReference type="InterPro" id="IPR004733">
    <property type="entry name" value="PurM_cligase"/>
</dbReference>
<dbReference type="NCBIfam" id="TIGR00878">
    <property type="entry name" value="purM"/>
    <property type="match status" value="1"/>
</dbReference>
<dbReference type="PANTHER" id="PTHR10520:SF12">
    <property type="entry name" value="TRIFUNCTIONAL PURINE BIOSYNTHETIC PROTEIN ADENOSINE-3"/>
    <property type="match status" value="1"/>
</dbReference>
<dbReference type="PANTHER" id="PTHR10520">
    <property type="entry name" value="TRIFUNCTIONAL PURINE BIOSYNTHETIC PROTEIN ADENOSINE-3-RELATED"/>
    <property type="match status" value="1"/>
</dbReference>
<dbReference type="Pfam" id="PF00586">
    <property type="entry name" value="AIRS"/>
    <property type="match status" value="1"/>
</dbReference>
<dbReference type="Pfam" id="PF02769">
    <property type="entry name" value="AIRS_C"/>
    <property type="match status" value="1"/>
</dbReference>
<dbReference type="SUPFAM" id="SSF56042">
    <property type="entry name" value="PurM C-terminal domain-like"/>
    <property type="match status" value="1"/>
</dbReference>
<dbReference type="SUPFAM" id="SSF55326">
    <property type="entry name" value="PurM N-terminal domain-like"/>
    <property type="match status" value="1"/>
</dbReference>
<feature type="chain" id="PRO_0000258412" description="Phosphoribosylformylglycinamidine cyclo-ligase">
    <location>
        <begin position="1"/>
        <end position="340"/>
    </location>
</feature>
<gene>
    <name evidence="1" type="primary">purM</name>
    <name type="ordered locus">SAK_0060</name>
</gene>
<proteinExistence type="inferred from homology"/>
<sequence>MSEKNAYAKSGVDVEAGYEVVERIKKHVARTERAGVMGALGGFGGMFDLSKTGVREPVLVSGTDGVGTKLMLAIKYQQHDTIGQDCVAMCVNDIIAAGAEPLYFLDYVATGKNEPAKLEQVVAGVAEGCVQAGAALIGGETAEMPGMYGEDDYDLAGFAVGVAEKSQIIDGSKVKEGDILLGLASSGIHSNGYSLVRRVFADYTGNEVLPELEGKQLKDVLLEPTRIYVKAVLPLIKEELVNGIAHITGGGFIENVPRMFADDLAAEIDEDKVPVLPIFNAIEKYGDIKHEEMFEIFNMGVGLMLAVSPENVNRVKELLDEPVYEIGRIIKKADDSVVIK</sequence>
<evidence type="ECO:0000255" key="1">
    <source>
        <dbReference type="HAMAP-Rule" id="MF_00741"/>
    </source>
</evidence>
<comment type="catalytic activity">
    <reaction evidence="1">
        <text>2-formamido-N(1)-(5-O-phospho-beta-D-ribosyl)acetamidine + ATP = 5-amino-1-(5-phospho-beta-D-ribosyl)imidazole + ADP + phosphate + H(+)</text>
        <dbReference type="Rhea" id="RHEA:23032"/>
        <dbReference type="ChEBI" id="CHEBI:15378"/>
        <dbReference type="ChEBI" id="CHEBI:30616"/>
        <dbReference type="ChEBI" id="CHEBI:43474"/>
        <dbReference type="ChEBI" id="CHEBI:137981"/>
        <dbReference type="ChEBI" id="CHEBI:147287"/>
        <dbReference type="ChEBI" id="CHEBI:456216"/>
        <dbReference type="EC" id="6.3.3.1"/>
    </reaction>
</comment>
<comment type="pathway">
    <text evidence="1">Purine metabolism; IMP biosynthesis via de novo pathway; 5-amino-1-(5-phospho-D-ribosyl)imidazole from N(2)-formyl-N(1)-(5-phospho-D-ribosyl)glycinamide: step 2/2.</text>
</comment>
<comment type="subcellular location">
    <subcellularLocation>
        <location evidence="1">Cytoplasm</location>
    </subcellularLocation>
</comment>
<comment type="similarity">
    <text evidence="1">Belongs to the AIR synthase family.</text>
</comment>
<protein>
    <recommendedName>
        <fullName evidence="1">Phosphoribosylformylglycinamidine cyclo-ligase</fullName>
        <ecNumber evidence="1">6.3.3.1</ecNumber>
    </recommendedName>
    <alternativeName>
        <fullName evidence="1">AIR synthase</fullName>
    </alternativeName>
    <alternativeName>
        <fullName evidence="1">AIRS</fullName>
    </alternativeName>
    <alternativeName>
        <fullName evidence="1">Phosphoribosyl-aminoimidazole synthetase</fullName>
    </alternativeName>
</protein>
<organism>
    <name type="scientific">Streptococcus agalactiae serotype Ia (strain ATCC 27591 / A909 / CDC SS700)</name>
    <dbReference type="NCBI Taxonomy" id="205921"/>
    <lineage>
        <taxon>Bacteria</taxon>
        <taxon>Bacillati</taxon>
        <taxon>Bacillota</taxon>
        <taxon>Bacilli</taxon>
        <taxon>Lactobacillales</taxon>
        <taxon>Streptococcaceae</taxon>
        <taxon>Streptococcus</taxon>
    </lineage>
</organism>